<feature type="chain" id="PRO_0000355429" description="Cytochrome b6-f complex subunit 8">
    <location>
        <begin position="1"/>
        <end position="29"/>
    </location>
</feature>
<feature type="transmembrane region" description="Helical" evidence="1">
    <location>
        <begin position="3"/>
        <end position="23"/>
    </location>
</feature>
<proteinExistence type="inferred from homology"/>
<gene>
    <name evidence="1" type="primary">petN</name>
</gene>
<accession>Q19V97</accession>
<dbReference type="EMBL" id="DQ422812">
    <property type="protein sequence ID" value="ABD62267.2"/>
    <property type="molecule type" value="Genomic_DNA"/>
</dbReference>
<dbReference type="RefSeq" id="YP_001019105.1">
    <property type="nucleotide sequence ID" value="NC_008822.1"/>
</dbReference>
<dbReference type="SMR" id="Q19V97"/>
<dbReference type="GeneID" id="4783243"/>
<dbReference type="GO" id="GO:0009535">
    <property type="term" value="C:chloroplast thylakoid membrane"/>
    <property type="evidence" value="ECO:0007669"/>
    <property type="project" value="UniProtKB-SubCell"/>
</dbReference>
<dbReference type="GO" id="GO:0009512">
    <property type="term" value="C:cytochrome b6f complex"/>
    <property type="evidence" value="ECO:0007669"/>
    <property type="project" value="InterPro"/>
</dbReference>
<dbReference type="GO" id="GO:0045158">
    <property type="term" value="F:electron transporter, transferring electrons within cytochrome b6/f complex of photosystem II activity"/>
    <property type="evidence" value="ECO:0007669"/>
    <property type="project" value="InterPro"/>
</dbReference>
<dbReference type="GO" id="GO:0017004">
    <property type="term" value="P:cytochrome complex assembly"/>
    <property type="evidence" value="ECO:0007669"/>
    <property type="project" value="UniProtKB-UniRule"/>
</dbReference>
<dbReference type="GO" id="GO:0015979">
    <property type="term" value="P:photosynthesis"/>
    <property type="evidence" value="ECO:0007669"/>
    <property type="project" value="UniProtKB-KW"/>
</dbReference>
<dbReference type="HAMAP" id="MF_00395">
    <property type="entry name" value="Cytb6_f_PetN"/>
    <property type="match status" value="1"/>
</dbReference>
<dbReference type="InterPro" id="IPR036143">
    <property type="entry name" value="Cytochr_b6-f_cplx_su8_sf"/>
</dbReference>
<dbReference type="InterPro" id="IPR005497">
    <property type="entry name" value="Cytochrome_b6-f_cplx_su8"/>
</dbReference>
<dbReference type="Pfam" id="PF03742">
    <property type="entry name" value="PetN"/>
    <property type="match status" value="1"/>
</dbReference>
<dbReference type="SUPFAM" id="SSF103451">
    <property type="entry name" value="PetN subunit of the cytochrome b6f complex"/>
    <property type="match status" value="1"/>
</dbReference>
<geneLocation type="chloroplast"/>
<organism>
    <name type="scientific">Chlorokybus atmophyticus</name>
    <name type="common">Soil alga</name>
    <dbReference type="NCBI Taxonomy" id="3144"/>
    <lineage>
        <taxon>Eukaryota</taxon>
        <taxon>Viridiplantae</taxon>
        <taxon>Streptophyta</taxon>
        <taxon>Chlorokybophyceae</taxon>
        <taxon>Chlorokybales</taxon>
        <taxon>Chlorokybaceae</taxon>
        <taxon>Chlorokybus</taxon>
    </lineage>
</organism>
<keyword id="KW-0150">Chloroplast</keyword>
<keyword id="KW-0249">Electron transport</keyword>
<keyword id="KW-0472">Membrane</keyword>
<keyword id="KW-0602">Photosynthesis</keyword>
<keyword id="KW-0934">Plastid</keyword>
<keyword id="KW-0793">Thylakoid</keyword>
<keyword id="KW-0812">Transmembrane</keyword>
<keyword id="KW-1133">Transmembrane helix</keyword>
<keyword id="KW-0813">Transport</keyword>
<reference key="1">
    <citation type="journal article" date="2007" name="BMC Biol.">
        <title>A clade uniting the green algae Mesostigma viride and Chlorokybus atmophyticus represents the deepest branch of the Streptophyta in chloroplast genome-based phylogenies.</title>
        <authorList>
            <person name="Lemieux C."/>
            <person name="Otis C."/>
            <person name="Turmel M."/>
        </authorList>
    </citation>
    <scope>NUCLEOTIDE SEQUENCE [LARGE SCALE GENOMIC DNA]</scope>
    <source>
        <strain>SAG 48.80</strain>
    </source>
</reference>
<protein>
    <recommendedName>
        <fullName evidence="1">Cytochrome b6-f complex subunit 8</fullName>
    </recommendedName>
    <alternativeName>
        <fullName evidence="1">Cytochrome b6-f complex subunit PetN</fullName>
    </alternativeName>
    <alternativeName>
        <fullName evidence="1">Cytochrome b6-f complex subunit VIII</fullName>
    </alternativeName>
</protein>
<evidence type="ECO:0000255" key="1">
    <source>
        <dbReference type="HAMAP-Rule" id="MF_00395"/>
    </source>
</evidence>
<name>PETN_CHLAT</name>
<sequence>MDIVSLGWAFLMVVFSFSLSLVVWGRNGL</sequence>
<comment type="function">
    <text evidence="1">Component of the cytochrome b6-f complex, which mediates electron transfer between photosystem II (PSII) and photosystem I (PSI), cyclic electron flow around PSI, and state transitions.</text>
</comment>
<comment type="subunit">
    <text evidence="1">The 4 large subunits of the cytochrome b6-f complex are cytochrome b6, subunit IV (17 kDa polypeptide, PetD), cytochrome f and the Rieske protein, while the 4 small subunits are PetG, PetL, PetM and PetN. The complex functions as a dimer.</text>
</comment>
<comment type="subcellular location">
    <subcellularLocation>
        <location evidence="1">Plastid</location>
        <location evidence="1">Chloroplast thylakoid membrane</location>
        <topology evidence="1">Single-pass membrane protein</topology>
    </subcellularLocation>
</comment>
<comment type="similarity">
    <text evidence="1">Belongs to the PetN family.</text>
</comment>